<comment type="function">
    <text evidence="1">RNA chaperone that binds small regulatory RNA (sRNAs) and mRNAs to facilitate mRNA translational regulation in response to envelope stress, environmental stress and changes in metabolite concentrations. Also binds with high specificity to tRNAs.</text>
</comment>
<comment type="subunit">
    <text evidence="1">Homohexamer.</text>
</comment>
<comment type="similarity">
    <text evidence="1">Belongs to the Hfq family.</text>
</comment>
<gene>
    <name evidence="1" type="primary">hfq</name>
    <name type="ordered locus">IL0333</name>
</gene>
<organism>
    <name type="scientific">Idiomarina loihiensis (strain ATCC BAA-735 / DSM 15497 / L2-TR)</name>
    <dbReference type="NCBI Taxonomy" id="283942"/>
    <lineage>
        <taxon>Bacteria</taxon>
        <taxon>Pseudomonadati</taxon>
        <taxon>Pseudomonadota</taxon>
        <taxon>Gammaproteobacteria</taxon>
        <taxon>Alteromonadales</taxon>
        <taxon>Idiomarinaceae</taxon>
        <taxon>Idiomarina</taxon>
    </lineage>
</organism>
<evidence type="ECO:0000255" key="1">
    <source>
        <dbReference type="HAMAP-Rule" id="MF_00436"/>
    </source>
</evidence>
<evidence type="ECO:0000255" key="2">
    <source>
        <dbReference type="PROSITE-ProRule" id="PRU01346"/>
    </source>
</evidence>
<dbReference type="EMBL" id="AE017340">
    <property type="protein sequence ID" value="AAV81176.1"/>
    <property type="molecule type" value="Genomic_DNA"/>
</dbReference>
<dbReference type="RefSeq" id="WP_011233595.1">
    <property type="nucleotide sequence ID" value="NC_006512.1"/>
</dbReference>
<dbReference type="SMR" id="Q5QW99"/>
<dbReference type="STRING" id="283942.IL0333"/>
<dbReference type="GeneID" id="41335480"/>
<dbReference type="KEGG" id="ilo:IL0333"/>
<dbReference type="eggNOG" id="COG1923">
    <property type="taxonomic scope" value="Bacteria"/>
</dbReference>
<dbReference type="HOGENOM" id="CLU_113688_2_2_6"/>
<dbReference type="OrthoDB" id="9799751at2"/>
<dbReference type="Proteomes" id="UP000001171">
    <property type="component" value="Chromosome"/>
</dbReference>
<dbReference type="GO" id="GO:0005829">
    <property type="term" value="C:cytosol"/>
    <property type="evidence" value="ECO:0007669"/>
    <property type="project" value="TreeGrafter"/>
</dbReference>
<dbReference type="GO" id="GO:0003723">
    <property type="term" value="F:RNA binding"/>
    <property type="evidence" value="ECO:0007669"/>
    <property type="project" value="UniProtKB-UniRule"/>
</dbReference>
<dbReference type="GO" id="GO:0006355">
    <property type="term" value="P:regulation of DNA-templated transcription"/>
    <property type="evidence" value="ECO:0007669"/>
    <property type="project" value="InterPro"/>
</dbReference>
<dbReference type="GO" id="GO:0043487">
    <property type="term" value="P:regulation of RNA stability"/>
    <property type="evidence" value="ECO:0007669"/>
    <property type="project" value="TreeGrafter"/>
</dbReference>
<dbReference type="GO" id="GO:0045974">
    <property type="term" value="P:regulation of translation, ncRNA-mediated"/>
    <property type="evidence" value="ECO:0007669"/>
    <property type="project" value="TreeGrafter"/>
</dbReference>
<dbReference type="CDD" id="cd01716">
    <property type="entry name" value="Hfq"/>
    <property type="match status" value="1"/>
</dbReference>
<dbReference type="FunFam" id="2.30.30.100:FF:000001">
    <property type="entry name" value="RNA-binding protein Hfq"/>
    <property type="match status" value="1"/>
</dbReference>
<dbReference type="Gene3D" id="2.30.30.100">
    <property type="match status" value="1"/>
</dbReference>
<dbReference type="HAMAP" id="MF_00436">
    <property type="entry name" value="Hfq"/>
    <property type="match status" value="1"/>
</dbReference>
<dbReference type="InterPro" id="IPR005001">
    <property type="entry name" value="Hfq"/>
</dbReference>
<dbReference type="InterPro" id="IPR010920">
    <property type="entry name" value="LSM_dom_sf"/>
</dbReference>
<dbReference type="InterPro" id="IPR047575">
    <property type="entry name" value="Sm"/>
</dbReference>
<dbReference type="NCBIfam" id="TIGR02383">
    <property type="entry name" value="Hfq"/>
    <property type="match status" value="1"/>
</dbReference>
<dbReference type="NCBIfam" id="NF001602">
    <property type="entry name" value="PRK00395.1"/>
    <property type="match status" value="1"/>
</dbReference>
<dbReference type="PANTHER" id="PTHR34772">
    <property type="entry name" value="RNA-BINDING PROTEIN HFQ"/>
    <property type="match status" value="1"/>
</dbReference>
<dbReference type="PANTHER" id="PTHR34772:SF1">
    <property type="entry name" value="RNA-BINDING PROTEIN HFQ"/>
    <property type="match status" value="1"/>
</dbReference>
<dbReference type="Pfam" id="PF17209">
    <property type="entry name" value="Hfq"/>
    <property type="match status" value="1"/>
</dbReference>
<dbReference type="SUPFAM" id="SSF50182">
    <property type="entry name" value="Sm-like ribonucleoproteins"/>
    <property type="match status" value="1"/>
</dbReference>
<dbReference type="PROSITE" id="PS52002">
    <property type="entry name" value="SM"/>
    <property type="match status" value="1"/>
</dbReference>
<name>HFQ_IDILO</name>
<keyword id="KW-1185">Reference proteome</keyword>
<keyword id="KW-0694">RNA-binding</keyword>
<keyword id="KW-0346">Stress response</keyword>
<feature type="chain" id="PRO_0000095643" description="RNA-binding protein Hfq">
    <location>
        <begin position="1"/>
        <end position="85"/>
    </location>
</feature>
<feature type="domain" description="Sm" evidence="2">
    <location>
        <begin position="9"/>
        <end position="68"/>
    </location>
</feature>
<accession>Q5QW99</accession>
<reference key="1">
    <citation type="journal article" date="2004" name="Proc. Natl. Acad. Sci. U.S.A.">
        <title>Genome sequence of the deep-sea gamma-proteobacterium Idiomarina loihiensis reveals amino acid fermentation as a source of carbon and energy.</title>
        <authorList>
            <person name="Hou S."/>
            <person name="Saw J.H."/>
            <person name="Lee K.S."/>
            <person name="Freitas T.A."/>
            <person name="Belisle C."/>
            <person name="Kawarabayasi Y."/>
            <person name="Donachie S.P."/>
            <person name="Pikina A."/>
            <person name="Galperin M.Y."/>
            <person name="Koonin E.V."/>
            <person name="Makarova K.S."/>
            <person name="Omelchenko M.V."/>
            <person name="Sorokin A."/>
            <person name="Wolf Y.I."/>
            <person name="Li Q.X."/>
            <person name="Keum Y.S."/>
            <person name="Campbell S."/>
            <person name="Denery J."/>
            <person name="Aizawa S."/>
            <person name="Shibata S."/>
            <person name="Malahoff A."/>
            <person name="Alam M."/>
        </authorList>
    </citation>
    <scope>NUCLEOTIDE SEQUENCE [LARGE SCALE GENOMIC DNA]</scope>
    <source>
        <strain>ATCC BAA-735 / DSM 15497 / L2-TR</strain>
    </source>
</reference>
<protein>
    <recommendedName>
        <fullName evidence="1">RNA-binding protein Hfq</fullName>
    </recommendedName>
</protein>
<proteinExistence type="inferred from homology"/>
<sequence length="85" mass="9615">MAKGQTLQDPFLNALRRERIPVSIYLVNGIKLQGQIESFDQFVVLLKNTVSQMVYKHAISTVVPARIPQNYLPQQAGEDMAEIED</sequence>